<feature type="transit peptide" description="Mitochondrion" evidence="2">
    <location>
        <begin position="1"/>
        <end status="unknown"/>
    </location>
</feature>
<feature type="chain" id="PRO_0000019558" description="Cytochrome c oxidase assembly protein COX16 homolog, mitochondrial">
    <location>
        <begin status="unknown"/>
        <end position="106"/>
    </location>
</feature>
<feature type="transmembrane region" description="Helical" evidence="2">
    <location>
        <begin position="15"/>
        <end position="37"/>
    </location>
</feature>
<feature type="region of interest" description="Disordered" evidence="3">
    <location>
        <begin position="77"/>
        <end position="106"/>
    </location>
</feature>
<feature type="compositionally biased region" description="Basic and acidic residues" evidence="3">
    <location>
        <begin position="77"/>
        <end position="88"/>
    </location>
</feature>
<accession>Q5RCY6</accession>
<name>COX16_PONAB</name>
<keyword id="KW-0472">Membrane</keyword>
<keyword id="KW-0496">Mitochondrion</keyword>
<keyword id="KW-0999">Mitochondrion inner membrane</keyword>
<keyword id="KW-1185">Reference proteome</keyword>
<keyword id="KW-0809">Transit peptide</keyword>
<keyword id="KW-0812">Transmembrane</keyword>
<keyword id="KW-1133">Transmembrane helix</keyword>
<sequence>MFAPAVMRAFRKNKTLGYGVPMLLLIVGGSFGLREFSQIRYDAVKSKMDPELEKKLKENKISLESEYEKIKDSKFDDWKNIRGPRPWEDPDLLQGRNPESLKTKTT</sequence>
<comment type="function">
    <text evidence="1">Required for the assembly of the mitochondrial respiratory chain complex IV (CIV), also known as cytochrome c oxidase. May participate in merging the COX1 and COX2 assembly lines.</text>
</comment>
<comment type="subcellular location">
    <subcellularLocation>
        <location evidence="1">Mitochondrion inner membrane</location>
        <topology evidence="1">Single-pass membrane protein</topology>
    </subcellularLocation>
</comment>
<comment type="similarity">
    <text evidence="4">Belongs to the COX16 family.</text>
</comment>
<evidence type="ECO:0000250" key="1">
    <source>
        <dbReference type="UniProtKB" id="P47081"/>
    </source>
</evidence>
<evidence type="ECO:0000255" key="2"/>
<evidence type="ECO:0000256" key="3">
    <source>
        <dbReference type="SAM" id="MobiDB-lite"/>
    </source>
</evidence>
<evidence type="ECO:0000305" key="4"/>
<protein>
    <recommendedName>
        <fullName>Cytochrome c oxidase assembly protein COX16 homolog, mitochondrial</fullName>
    </recommendedName>
</protein>
<proteinExistence type="inferred from homology"/>
<organism>
    <name type="scientific">Pongo abelii</name>
    <name type="common">Sumatran orangutan</name>
    <name type="synonym">Pongo pygmaeus abelii</name>
    <dbReference type="NCBI Taxonomy" id="9601"/>
    <lineage>
        <taxon>Eukaryota</taxon>
        <taxon>Metazoa</taxon>
        <taxon>Chordata</taxon>
        <taxon>Craniata</taxon>
        <taxon>Vertebrata</taxon>
        <taxon>Euteleostomi</taxon>
        <taxon>Mammalia</taxon>
        <taxon>Eutheria</taxon>
        <taxon>Euarchontoglires</taxon>
        <taxon>Primates</taxon>
        <taxon>Haplorrhini</taxon>
        <taxon>Catarrhini</taxon>
        <taxon>Hominidae</taxon>
        <taxon>Pongo</taxon>
    </lineage>
</organism>
<dbReference type="EMBL" id="CR858132">
    <property type="protein sequence ID" value="CAH90371.1"/>
    <property type="molecule type" value="mRNA"/>
</dbReference>
<dbReference type="RefSeq" id="NP_001125180.1">
    <property type="nucleotide sequence ID" value="NM_001131708.1"/>
</dbReference>
<dbReference type="FunCoup" id="Q5RCY6">
    <property type="interactions" value="260"/>
</dbReference>
<dbReference type="STRING" id="9601.ENSPPYP00000006767"/>
<dbReference type="GeneID" id="100172069"/>
<dbReference type="CTD" id="51241"/>
<dbReference type="eggNOG" id="ENOG502S3RD">
    <property type="taxonomic scope" value="Eukaryota"/>
</dbReference>
<dbReference type="InParanoid" id="Q5RCY6"/>
<dbReference type="OrthoDB" id="5516033at2759"/>
<dbReference type="Proteomes" id="UP000001595">
    <property type="component" value="Unplaced"/>
</dbReference>
<dbReference type="GO" id="GO:0005743">
    <property type="term" value="C:mitochondrial inner membrane"/>
    <property type="evidence" value="ECO:0007669"/>
    <property type="project" value="UniProtKB-SubCell"/>
</dbReference>
<dbReference type="GO" id="GO:0033617">
    <property type="term" value="P:mitochondrial cytochrome c oxidase assembly"/>
    <property type="evidence" value="ECO:0007669"/>
    <property type="project" value="TreeGrafter"/>
</dbReference>
<dbReference type="InterPro" id="IPR020164">
    <property type="entry name" value="Cyt_c_Oxase_assmbl_COX16"/>
</dbReference>
<dbReference type="PANTHER" id="PTHR17130:SF14">
    <property type="entry name" value="CYTOCHROME C OXIDASE ASSEMBLY PROTEIN COX16 HOMOLOG, MITOCHONDRIAL"/>
    <property type="match status" value="1"/>
</dbReference>
<dbReference type="PANTHER" id="PTHR17130">
    <property type="entry name" value="MITOCHONDRIAL OUTER MEMBRANE PROTEIN 25"/>
    <property type="match status" value="1"/>
</dbReference>
<dbReference type="Pfam" id="PF14138">
    <property type="entry name" value="COX16"/>
    <property type="match status" value="1"/>
</dbReference>
<reference key="1">
    <citation type="submission" date="2004-11" db="EMBL/GenBank/DDBJ databases">
        <authorList>
            <consortium name="The German cDNA consortium"/>
        </authorList>
    </citation>
    <scope>NUCLEOTIDE SEQUENCE [LARGE SCALE MRNA]</scope>
    <source>
        <tissue>Heart</tissue>
    </source>
</reference>
<gene>
    <name type="primary">COX16</name>
</gene>